<accession>Q46F99</accession>
<evidence type="ECO:0000255" key="1">
    <source>
        <dbReference type="HAMAP-Rule" id="MF_00308"/>
    </source>
</evidence>
<evidence type="ECO:0000305" key="2"/>
<comment type="function">
    <text evidence="1">Molecular chaperone capable of stabilizing a range of proteins. Seems to fulfill an ATP-independent, HSP70-like function in archaeal de novo protein folding.</text>
</comment>
<comment type="subunit">
    <text evidence="1">Heterohexamer of two alpha and four beta subunits.</text>
</comment>
<comment type="subcellular location">
    <subcellularLocation>
        <location evidence="1">Cytoplasm</location>
    </subcellularLocation>
</comment>
<comment type="similarity">
    <text evidence="2">Belongs to the prefoldin subunit alpha family.</text>
</comment>
<keyword id="KW-0143">Chaperone</keyword>
<keyword id="KW-0963">Cytoplasm</keyword>
<organism>
    <name type="scientific">Methanosarcina barkeri (strain Fusaro / DSM 804)</name>
    <dbReference type="NCBI Taxonomy" id="269797"/>
    <lineage>
        <taxon>Archaea</taxon>
        <taxon>Methanobacteriati</taxon>
        <taxon>Methanobacteriota</taxon>
        <taxon>Stenosarchaea group</taxon>
        <taxon>Methanomicrobia</taxon>
        <taxon>Methanosarcinales</taxon>
        <taxon>Methanosarcinaceae</taxon>
        <taxon>Methanosarcina</taxon>
    </lineage>
</organism>
<sequence length="144" mass="15883">MVEVSEEDIRNLAARHQEFQRQAEGLKQQMNMVQASITSCDQATVTINELKTVSAEGKTAETMVPVGFGSFVYAEIKNADKVIVDLGAGFSAEETADEAVETLKRRKEQLTKILEQMSASLTKYIQGMQALEVEAEKLQQPSQA</sequence>
<dbReference type="EMBL" id="CP000099">
    <property type="protein sequence ID" value="AAZ69443.1"/>
    <property type="molecule type" value="Genomic_DNA"/>
</dbReference>
<dbReference type="SMR" id="Q46F99"/>
<dbReference type="STRING" id="269797.Mbar_A0461"/>
<dbReference type="PaxDb" id="269797-Mbar_A0461"/>
<dbReference type="KEGG" id="mba:Mbar_A0461"/>
<dbReference type="eggNOG" id="arCOG01341">
    <property type="taxonomic scope" value="Archaea"/>
</dbReference>
<dbReference type="HOGENOM" id="CLU_091867_1_1_2"/>
<dbReference type="OrthoDB" id="10045at2157"/>
<dbReference type="GO" id="GO:0005737">
    <property type="term" value="C:cytoplasm"/>
    <property type="evidence" value="ECO:0007669"/>
    <property type="project" value="UniProtKB-SubCell"/>
</dbReference>
<dbReference type="GO" id="GO:0016272">
    <property type="term" value="C:prefoldin complex"/>
    <property type="evidence" value="ECO:0007669"/>
    <property type="project" value="UniProtKB-UniRule"/>
</dbReference>
<dbReference type="GO" id="GO:0051082">
    <property type="term" value="F:unfolded protein binding"/>
    <property type="evidence" value="ECO:0007669"/>
    <property type="project" value="UniProtKB-UniRule"/>
</dbReference>
<dbReference type="GO" id="GO:0006457">
    <property type="term" value="P:protein folding"/>
    <property type="evidence" value="ECO:0007669"/>
    <property type="project" value="UniProtKB-UniRule"/>
</dbReference>
<dbReference type="CDD" id="cd23160">
    <property type="entry name" value="Prefoldin_alpha_GimC"/>
    <property type="match status" value="1"/>
</dbReference>
<dbReference type="Gene3D" id="1.10.287.370">
    <property type="match status" value="1"/>
</dbReference>
<dbReference type="HAMAP" id="MF_00308">
    <property type="entry name" value="PfdA"/>
    <property type="match status" value="1"/>
</dbReference>
<dbReference type="InterPro" id="IPR011599">
    <property type="entry name" value="PFD_alpha_archaea"/>
</dbReference>
<dbReference type="InterPro" id="IPR009053">
    <property type="entry name" value="Prefoldin"/>
</dbReference>
<dbReference type="InterPro" id="IPR004127">
    <property type="entry name" value="Prefoldin_subunit_alpha"/>
</dbReference>
<dbReference type="NCBIfam" id="TIGR00293">
    <property type="entry name" value="prefoldin subunit alpha"/>
    <property type="match status" value="1"/>
</dbReference>
<dbReference type="PANTHER" id="PTHR12674">
    <property type="entry name" value="PREFOLDIN SUBUNIT 5"/>
    <property type="match status" value="1"/>
</dbReference>
<dbReference type="PANTHER" id="PTHR12674:SF4">
    <property type="entry name" value="PREFOLDIN SUBUNIT ALPHA 2"/>
    <property type="match status" value="1"/>
</dbReference>
<dbReference type="Pfam" id="PF02996">
    <property type="entry name" value="Prefoldin"/>
    <property type="match status" value="1"/>
</dbReference>
<dbReference type="SUPFAM" id="SSF46579">
    <property type="entry name" value="Prefoldin"/>
    <property type="match status" value="1"/>
</dbReference>
<protein>
    <recommendedName>
        <fullName evidence="1">Prefoldin subunit alpha</fullName>
    </recommendedName>
    <alternativeName>
        <fullName evidence="1">GimC subunit alpha</fullName>
    </alternativeName>
</protein>
<feature type="chain" id="PRO_0000300765" description="Prefoldin subunit alpha">
    <location>
        <begin position="1"/>
        <end position="144"/>
    </location>
</feature>
<name>PFDA_METBF</name>
<reference key="1">
    <citation type="journal article" date="2006" name="J. Bacteriol.">
        <title>The Methanosarcina barkeri genome: comparative analysis with Methanosarcina acetivorans and Methanosarcina mazei reveals extensive rearrangement within methanosarcinal genomes.</title>
        <authorList>
            <person name="Maeder D.L."/>
            <person name="Anderson I."/>
            <person name="Brettin T.S."/>
            <person name="Bruce D.C."/>
            <person name="Gilna P."/>
            <person name="Han C.S."/>
            <person name="Lapidus A."/>
            <person name="Metcalf W.W."/>
            <person name="Saunders E."/>
            <person name="Tapia R."/>
            <person name="Sowers K.R."/>
        </authorList>
    </citation>
    <scope>NUCLEOTIDE SEQUENCE [LARGE SCALE GENOMIC DNA]</scope>
    <source>
        <strain>Fusaro / DSM 804</strain>
    </source>
</reference>
<proteinExistence type="inferred from homology"/>
<gene>
    <name evidence="1" type="primary">pfdA</name>
    <name type="ordered locus">Mbar_A0461</name>
</gene>